<evidence type="ECO:0000255" key="1">
    <source>
        <dbReference type="HAMAP-Rule" id="MF_01377"/>
    </source>
</evidence>
<protein>
    <recommendedName>
        <fullName evidence="1">Probable lipid kinase YegS</fullName>
        <ecNumber evidence="1">2.7.1.-</ecNumber>
    </recommendedName>
</protein>
<organism>
    <name type="scientific">Salmonella agona (strain SL483)</name>
    <dbReference type="NCBI Taxonomy" id="454166"/>
    <lineage>
        <taxon>Bacteria</taxon>
        <taxon>Pseudomonadati</taxon>
        <taxon>Pseudomonadota</taxon>
        <taxon>Gammaproteobacteria</taxon>
        <taxon>Enterobacterales</taxon>
        <taxon>Enterobacteriaceae</taxon>
        <taxon>Salmonella</taxon>
    </lineage>
</organism>
<keyword id="KW-0067">ATP-binding</keyword>
<keyword id="KW-0963">Cytoplasm</keyword>
<keyword id="KW-0418">Kinase</keyword>
<keyword id="KW-0444">Lipid biosynthesis</keyword>
<keyword id="KW-0443">Lipid metabolism</keyword>
<keyword id="KW-0460">Magnesium</keyword>
<keyword id="KW-0479">Metal-binding</keyword>
<keyword id="KW-0547">Nucleotide-binding</keyword>
<keyword id="KW-0594">Phospholipid biosynthesis</keyword>
<keyword id="KW-1208">Phospholipid metabolism</keyword>
<keyword id="KW-0808">Transferase</keyword>
<name>YEGS_SALA4</name>
<reference key="1">
    <citation type="journal article" date="2011" name="J. Bacteriol.">
        <title>Comparative genomics of 28 Salmonella enterica isolates: evidence for CRISPR-mediated adaptive sublineage evolution.</title>
        <authorList>
            <person name="Fricke W.F."/>
            <person name="Mammel M.K."/>
            <person name="McDermott P.F."/>
            <person name="Tartera C."/>
            <person name="White D.G."/>
            <person name="Leclerc J.E."/>
            <person name="Ravel J."/>
            <person name="Cebula T.A."/>
        </authorList>
    </citation>
    <scope>NUCLEOTIDE SEQUENCE [LARGE SCALE GENOMIC DNA]</scope>
    <source>
        <strain>SL483</strain>
    </source>
</reference>
<gene>
    <name evidence="1" type="primary">yegS</name>
    <name type="ordered locus">SeAg_B2283</name>
</gene>
<proteinExistence type="inferred from homology"/>
<accession>B5EXY0</accession>
<dbReference type="EC" id="2.7.1.-" evidence="1"/>
<dbReference type="EMBL" id="CP001138">
    <property type="protein sequence ID" value="ACH50796.1"/>
    <property type="molecule type" value="Genomic_DNA"/>
</dbReference>
<dbReference type="RefSeq" id="WP_001273393.1">
    <property type="nucleotide sequence ID" value="NC_011149.1"/>
</dbReference>
<dbReference type="SMR" id="B5EXY0"/>
<dbReference type="KEGG" id="sea:SeAg_B2283"/>
<dbReference type="HOGENOM" id="CLU_045532_1_1_6"/>
<dbReference type="Proteomes" id="UP000008819">
    <property type="component" value="Chromosome"/>
</dbReference>
<dbReference type="GO" id="GO:0005737">
    <property type="term" value="C:cytoplasm"/>
    <property type="evidence" value="ECO:0007669"/>
    <property type="project" value="UniProtKB-SubCell"/>
</dbReference>
<dbReference type="GO" id="GO:0005886">
    <property type="term" value="C:plasma membrane"/>
    <property type="evidence" value="ECO:0007669"/>
    <property type="project" value="TreeGrafter"/>
</dbReference>
<dbReference type="GO" id="GO:0005524">
    <property type="term" value="F:ATP binding"/>
    <property type="evidence" value="ECO:0007669"/>
    <property type="project" value="UniProtKB-UniRule"/>
</dbReference>
<dbReference type="GO" id="GO:0001727">
    <property type="term" value="F:lipid kinase activity"/>
    <property type="evidence" value="ECO:0007669"/>
    <property type="project" value="UniProtKB-UniRule"/>
</dbReference>
<dbReference type="GO" id="GO:0000287">
    <property type="term" value="F:magnesium ion binding"/>
    <property type="evidence" value="ECO:0007669"/>
    <property type="project" value="UniProtKB-UniRule"/>
</dbReference>
<dbReference type="GO" id="GO:0008654">
    <property type="term" value="P:phospholipid biosynthetic process"/>
    <property type="evidence" value="ECO:0007669"/>
    <property type="project" value="UniProtKB-UniRule"/>
</dbReference>
<dbReference type="FunFam" id="3.40.50.10330:FF:000008">
    <property type="entry name" value="Probable lipid kinase YegS"/>
    <property type="match status" value="1"/>
</dbReference>
<dbReference type="Gene3D" id="2.60.200.40">
    <property type="match status" value="1"/>
</dbReference>
<dbReference type="Gene3D" id="3.40.50.10330">
    <property type="entry name" value="Probable inorganic polyphosphate/atp-NAD kinase, domain 1"/>
    <property type="match status" value="1"/>
</dbReference>
<dbReference type="HAMAP" id="MF_01377">
    <property type="entry name" value="YegS"/>
    <property type="match status" value="1"/>
</dbReference>
<dbReference type="InterPro" id="IPR017438">
    <property type="entry name" value="ATP-NAD_kinase_N"/>
</dbReference>
<dbReference type="InterPro" id="IPR005218">
    <property type="entry name" value="Diacylglycerol/lipid_kinase"/>
</dbReference>
<dbReference type="InterPro" id="IPR001206">
    <property type="entry name" value="Diacylglycerol_kinase_cat_dom"/>
</dbReference>
<dbReference type="InterPro" id="IPR022433">
    <property type="entry name" value="Lip_kinase_YegS"/>
</dbReference>
<dbReference type="InterPro" id="IPR050187">
    <property type="entry name" value="Lipid_Phosphate_FormReg"/>
</dbReference>
<dbReference type="InterPro" id="IPR016064">
    <property type="entry name" value="NAD/diacylglycerol_kinase_sf"/>
</dbReference>
<dbReference type="InterPro" id="IPR045540">
    <property type="entry name" value="YegS/DAGK_C"/>
</dbReference>
<dbReference type="NCBIfam" id="TIGR03702">
    <property type="entry name" value="lip_kinase_YegS"/>
    <property type="match status" value="1"/>
</dbReference>
<dbReference type="NCBIfam" id="NF009602">
    <property type="entry name" value="PRK13054.1"/>
    <property type="match status" value="1"/>
</dbReference>
<dbReference type="NCBIfam" id="TIGR00147">
    <property type="entry name" value="YegS/Rv2252/BmrU family lipid kinase"/>
    <property type="match status" value="1"/>
</dbReference>
<dbReference type="PANTHER" id="PTHR12358:SF106">
    <property type="entry name" value="LIPID KINASE YEGS"/>
    <property type="match status" value="1"/>
</dbReference>
<dbReference type="PANTHER" id="PTHR12358">
    <property type="entry name" value="SPHINGOSINE KINASE"/>
    <property type="match status" value="1"/>
</dbReference>
<dbReference type="Pfam" id="PF00781">
    <property type="entry name" value="DAGK_cat"/>
    <property type="match status" value="1"/>
</dbReference>
<dbReference type="Pfam" id="PF19279">
    <property type="entry name" value="YegS_C"/>
    <property type="match status" value="1"/>
</dbReference>
<dbReference type="SMART" id="SM00046">
    <property type="entry name" value="DAGKc"/>
    <property type="match status" value="1"/>
</dbReference>
<dbReference type="SUPFAM" id="SSF111331">
    <property type="entry name" value="NAD kinase/diacylglycerol kinase-like"/>
    <property type="match status" value="1"/>
</dbReference>
<dbReference type="PROSITE" id="PS50146">
    <property type="entry name" value="DAGK"/>
    <property type="match status" value="1"/>
</dbReference>
<comment type="function">
    <text evidence="1">Probably phosphorylates lipids; the in vivo substrate is unknown.</text>
</comment>
<comment type="cofactor">
    <cofactor evidence="1">
        <name>Mg(2+)</name>
        <dbReference type="ChEBI" id="CHEBI:18420"/>
    </cofactor>
    <cofactor evidence="1">
        <name>Ca(2+)</name>
        <dbReference type="ChEBI" id="CHEBI:29108"/>
    </cofactor>
    <text evidence="1">Binds 1 Mg(2+) ion per subunit. Ca(2+) may be able to substitute.</text>
</comment>
<comment type="subcellular location">
    <subcellularLocation>
        <location evidence="1">Cytoplasm</location>
    </subcellularLocation>
</comment>
<comment type="similarity">
    <text evidence="1">Belongs to the diacylglycerol/lipid kinase family. YegS lipid kinase subfamily.</text>
</comment>
<sequence>MANFPASLLILNGKSADNQPLREAITLLRDEGIQIHVRVTWEKGDAQRYVDEARRLGVETVIAGGGDGTINEVSTALIQIRDGVAPALGLLPLGTANDFATSAGIPEALDKALKLAIAGNAMEIDMARVNDKTCFINMATGGFGTRITTETPEKLKAALGGVSYLIHGLMRMDTLTPDRCEIRGENFHWQGDALVIGIGNGRQAGGGQQLCPTALINDGLLQLRIFTGEELLPALFSTLTQSDDNPNIIDGASAWFDIHAPHEITFNLDGEPLSGQEFHIEVLPGALRCRLPPDCPLLR</sequence>
<feature type="chain" id="PRO_1000144872" description="Probable lipid kinase YegS">
    <location>
        <begin position="1"/>
        <end position="299"/>
    </location>
</feature>
<feature type="domain" description="DAGKc" evidence="1">
    <location>
        <begin position="2"/>
        <end position="133"/>
    </location>
</feature>
<feature type="active site" description="Proton acceptor" evidence="1">
    <location>
        <position position="271"/>
    </location>
</feature>
<feature type="binding site" evidence="1">
    <location>
        <position position="40"/>
    </location>
    <ligand>
        <name>ATP</name>
        <dbReference type="ChEBI" id="CHEBI:30616"/>
    </ligand>
</feature>
<feature type="binding site" evidence="1">
    <location>
        <begin position="66"/>
        <end position="72"/>
    </location>
    <ligand>
        <name>ATP</name>
        <dbReference type="ChEBI" id="CHEBI:30616"/>
    </ligand>
</feature>
<feature type="binding site" evidence="1">
    <location>
        <position position="95"/>
    </location>
    <ligand>
        <name>ATP</name>
        <dbReference type="ChEBI" id="CHEBI:30616"/>
    </ligand>
</feature>
<feature type="binding site" evidence="1">
    <location>
        <position position="215"/>
    </location>
    <ligand>
        <name>Mg(2+)</name>
        <dbReference type="ChEBI" id="CHEBI:18420"/>
    </ligand>
</feature>
<feature type="binding site" evidence="1">
    <location>
        <position position="218"/>
    </location>
    <ligand>
        <name>Mg(2+)</name>
        <dbReference type="ChEBI" id="CHEBI:18420"/>
    </ligand>
</feature>
<feature type="binding site" evidence="1">
    <location>
        <position position="220"/>
    </location>
    <ligand>
        <name>Mg(2+)</name>
        <dbReference type="ChEBI" id="CHEBI:18420"/>
    </ligand>
</feature>